<proteinExistence type="inferred from homology"/>
<protein>
    <recommendedName>
        <fullName evidence="7">Vacuolar calcium ion transporter</fullName>
    </recommendedName>
    <alternativeName>
        <fullName evidence="7">Vacuolar calcium exchanger</fullName>
    </alternativeName>
</protein>
<name>VCX1_CRYNH</name>
<dbReference type="EMBL" id="CP003820">
    <property type="protein sequence ID" value="AFR92163.2"/>
    <property type="molecule type" value="Genomic_DNA"/>
</dbReference>
<dbReference type="EMBL" id="CP003820">
    <property type="protein sequence ID" value="AGV15259.1"/>
    <property type="molecule type" value="Genomic_DNA"/>
</dbReference>
<dbReference type="RefSeq" id="XP_012046156.1">
    <molecule id="J9VDQ4-1"/>
    <property type="nucleotide sequence ID" value="XM_012190766.1"/>
</dbReference>
<dbReference type="RefSeq" id="XP_012046471.1">
    <molecule id="J9VDQ4-2"/>
    <property type="nucleotide sequence ID" value="XM_012191081.1"/>
</dbReference>
<dbReference type="SMR" id="J9VDQ4"/>
<dbReference type="GeneID" id="23883897"/>
<dbReference type="KEGG" id="cng:CNAG_00025"/>
<dbReference type="VEuPathDB" id="FungiDB:CNAG_00025"/>
<dbReference type="HOGENOM" id="CLU_008721_4_2_1"/>
<dbReference type="OrthoDB" id="9268at5206"/>
<dbReference type="PHI-base" id="PHI:3802"/>
<dbReference type="Proteomes" id="UP000010091">
    <property type="component" value="Chromosome 1"/>
</dbReference>
<dbReference type="GO" id="GO:0000329">
    <property type="term" value="C:fungal-type vacuole membrane"/>
    <property type="evidence" value="ECO:0007669"/>
    <property type="project" value="TreeGrafter"/>
</dbReference>
<dbReference type="GO" id="GO:0005774">
    <property type="term" value="C:vacuolar membrane"/>
    <property type="evidence" value="ECO:0000314"/>
    <property type="project" value="UniProtKB"/>
</dbReference>
<dbReference type="GO" id="GO:0015369">
    <property type="term" value="F:calcium:proton antiporter activity"/>
    <property type="evidence" value="ECO:0000305"/>
    <property type="project" value="UniProtKB"/>
</dbReference>
<dbReference type="GO" id="GO:0140146">
    <property type="term" value="P:calcium ion import into vacuole"/>
    <property type="evidence" value="ECO:0000315"/>
    <property type="project" value="UniProtKB"/>
</dbReference>
<dbReference type="GO" id="GO:0006874">
    <property type="term" value="P:intracellular calcium ion homeostasis"/>
    <property type="evidence" value="ECO:0007669"/>
    <property type="project" value="TreeGrafter"/>
</dbReference>
<dbReference type="FunFam" id="1.20.1420.30:FF:000024">
    <property type="entry name" value="Calcium/proton exchanger, variant"/>
    <property type="match status" value="1"/>
</dbReference>
<dbReference type="FunFam" id="1.20.1420.30:FF:000016">
    <property type="entry name" value="Membrane bound cation transporter"/>
    <property type="match status" value="1"/>
</dbReference>
<dbReference type="Gene3D" id="1.20.1420.30">
    <property type="entry name" value="NCX, central ion-binding region"/>
    <property type="match status" value="2"/>
</dbReference>
<dbReference type="InterPro" id="IPR004713">
    <property type="entry name" value="CaH_exchang"/>
</dbReference>
<dbReference type="InterPro" id="IPR004837">
    <property type="entry name" value="NaCa_Exmemb"/>
</dbReference>
<dbReference type="InterPro" id="IPR044880">
    <property type="entry name" value="NCX_ion-bd_dom_sf"/>
</dbReference>
<dbReference type="PANTHER" id="PTHR31503:SF20">
    <property type="entry name" value="CA(2+)_H(+) EXCHANGER, PUTATIVE (EUROFUNG)-RELATED"/>
    <property type="match status" value="1"/>
</dbReference>
<dbReference type="PANTHER" id="PTHR31503">
    <property type="entry name" value="VACUOLAR CALCIUM ION TRANSPORTER"/>
    <property type="match status" value="1"/>
</dbReference>
<dbReference type="Pfam" id="PF01699">
    <property type="entry name" value="Na_Ca_ex"/>
    <property type="match status" value="2"/>
</dbReference>
<gene>
    <name evidence="7" type="primary">VCX1</name>
    <name evidence="9" type="ORF">CNAG_00025</name>
</gene>
<sequence>MSPPRRVSFPPDTLQEDPPLADSPLSSPKLPEYDRQSSSTPIVSSNLPTDTTNSASAGPRRRQQPSRQVTLDASPPSATRRETTESARTQRSRAGSRRTSNSLDPNPGLMRRVTTVLFTPPKKIGKAPTYWGSMKAAITSTWLNVLLVFIPIGWALYLAKHNGGKDSISDTAVFCCTFIAIIPLAGLLGFATEEAALRLGQTLGGLLNATLGNAVELIVAILALIKCELQVVQSSLVGSILSNILLVLGMCFFAGGVRFAEQAIKSTAAQLNASLLLIAVIAVLIPSAFHFSISSSTSNTDASELANGEGADLLSMSHAVSILLLILYLGYLLFQMWTHATYYVDDAVTGSTQYPEAITNVSEKLKFRNFHRRKHDEEESYSTATTVSDAAVPPSARAEGGEVPATHGPGTAAAETGNRVEHEDAEEEEEEETPQMNVVCTIALMVIDTVLVGVTAEFLVDSINGMVESNPSLSAEWVGLILLPIVGNAAEHFTAVSVSVKDKLDLSISVAVGSSIQIALFVIPVIELLAWTIGKPMTLLFDPYESIVLFLSVLIVNQTLADGRSNWMEGMVLMMLYIIIAVSFWYYPGSTTATLLGCQDSSSVTG</sequence>
<accession>J9VDQ4</accession>
<accession>T2BNY7</accession>
<feature type="chain" id="PRO_0000451209" description="Vacuolar calcium ion transporter">
    <location>
        <begin position="1"/>
        <end position="606"/>
    </location>
</feature>
<feature type="topological domain" description="Cytoplasmic" evidence="1">
    <location>
        <begin position="1"/>
        <end position="137"/>
    </location>
</feature>
<feature type="transmembrane region" description="Helical" evidence="2">
    <location>
        <begin position="138"/>
        <end position="158"/>
    </location>
</feature>
<feature type="topological domain" description="Vacuolar" evidence="1">
    <location>
        <begin position="159"/>
        <end position="170"/>
    </location>
</feature>
<feature type="transmembrane region" description="Helical" evidence="2">
    <location>
        <begin position="171"/>
        <end position="191"/>
    </location>
</feature>
<feature type="topological domain" description="Cytoplasmic" evidence="1">
    <location>
        <begin position="192"/>
        <end position="204"/>
    </location>
</feature>
<feature type="transmembrane region" description="Helical" evidence="2">
    <location>
        <begin position="205"/>
        <end position="225"/>
    </location>
</feature>
<feature type="topological domain" description="Vacuolar" evidence="1">
    <location>
        <begin position="226"/>
        <end position="236"/>
    </location>
</feature>
<feature type="transmembrane region" description="Helical" evidence="2">
    <location>
        <begin position="237"/>
        <end position="257"/>
    </location>
</feature>
<feature type="topological domain" description="Cytoplasmic" evidence="1">
    <location>
        <begin position="258"/>
        <end position="272"/>
    </location>
</feature>
<feature type="transmembrane region" description="Helical" evidence="2">
    <location>
        <begin position="273"/>
        <end position="293"/>
    </location>
</feature>
<feature type="topological domain" description="Vacuolar" evidence="1">
    <location>
        <begin position="294"/>
        <end position="313"/>
    </location>
</feature>
<feature type="transmembrane region" description="Helical" evidence="2">
    <location>
        <begin position="314"/>
        <end position="334"/>
    </location>
</feature>
<feature type="topological domain" description="Cytoplasmic" evidence="1">
    <location>
        <begin position="335"/>
        <end position="437"/>
    </location>
</feature>
<feature type="transmembrane region" description="Helical" evidence="2">
    <location>
        <begin position="438"/>
        <end position="458"/>
    </location>
</feature>
<feature type="topological domain" description="Vacuolar" evidence="1">
    <location>
        <begin position="459"/>
        <end position="477"/>
    </location>
</feature>
<feature type="transmembrane region" description="Helical" evidence="2">
    <location>
        <begin position="478"/>
        <end position="498"/>
    </location>
</feature>
<feature type="topological domain" description="Cytoplasmic" evidence="1">
    <location>
        <begin position="499"/>
        <end position="505"/>
    </location>
</feature>
<feature type="transmembrane region" description="Helical" evidence="2">
    <location>
        <begin position="506"/>
        <end position="526"/>
    </location>
</feature>
<feature type="topological domain" description="Vacuolar" evidence="1">
    <location>
        <begin position="527"/>
        <end position="535"/>
    </location>
</feature>
<feature type="transmembrane region" description="Helical" evidence="2">
    <location>
        <begin position="536"/>
        <end position="556"/>
    </location>
</feature>
<feature type="topological domain" description="Cytoplasmic" evidence="1">
    <location>
        <begin position="557"/>
        <end position="566"/>
    </location>
</feature>
<feature type="transmembrane region" description="Helical" evidence="2">
    <location>
        <begin position="567"/>
        <end position="587"/>
    </location>
</feature>
<feature type="topological domain" description="Vacuolar" evidence="1">
    <location>
        <begin position="588"/>
        <end position="606"/>
    </location>
</feature>
<feature type="region of interest" description="Disordered" evidence="3">
    <location>
        <begin position="1"/>
        <end position="110"/>
    </location>
</feature>
<feature type="region of interest" description="Disordered" evidence="3">
    <location>
        <begin position="376"/>
        <end position="434"/>
    </location>
</feature>
<feature type="compositionally biased region" description="Low complexity" evidence="3">
    <location>
        <begin position="18"/>
        <end position="30"/>
    </location>
</feature>
<feature type="compositionally biased region" description="Polar residues" evidence="3">
    <location>
        <begin position="36"/>
        <end position="56"/>
    </location>
</feature>
<feature type="compositionally biased region" description="Acidic residues" evidence="3">
    <location>
        <begin position="423"/>
        <end position="433"/>
    </location>
</feature>
<feature type="splice variant" id="VSP_060770" description="In isoform 2." evidence="8">
    <original>MSPPRRVSFPPD</original>
    <variation>MFPQN</variation>
    <location>
        <begin position="1"/>
        <end position="12"/>
    </location>
</feature>
<organism evidence="10">
    <name type="scientific">Cryptococcus neoformans var. grubii serotype A (strain H99 / ATCC 208821 / CBS 10515 / FGSC 9487)</name>
    <name type="common">Filobasidiella neoformans var. grubii</name>
    <dbReference type="NCBI Taxonomy" id="235443"/>
    <lineage>
        <taxon>Eukaryota</taxon>
        <taxon>Fungi</taxon>
        <taxon>Dikarya</taxon>
        <taxon>Basidiomycota</taxon>
        <taxon>Agaricomycotina</taxon>
        <taxon>Tremellomycetes</taxon>
        <taxon>Tremellales</taxon>
        <taxon>Cryptococcaceae</taxon>
        <taxon>Cryptococcus</taxon>
        <taxon>Cryptococcus neoformans species complex</taxon>
    </lineage>
</organism>
<reference evidence="10" key="1">
    <citation type="journal article" date="2014" name="PLoS Genet.">
        <title>Analysis of the genome and transcriptome of Cryptococcus neoformans var. grubii reveals complex RNA expression and microevolution leading to virulence attenuation.</title>
        <authorList>
            <person name="Janbon G."/>
            <person name="Ormerod K.L."/>
            <person name="Paulet D."/>
            <person name="Byrnes E.J. III"/>
            <person name="Yadav V."/>
            <person name="Chatterjee G."/>
            <person name="Mullapudi N."/>
            <person name="Hon C.-C."/>
            <person name="Billmyre R.B."/>
            <person name="Brunel F."/>
            <person name="Bahn Y.-S."/>
            <person name="Chen W."/>
            <person name="Chen Y."/>
            <person name="Chow E.W.L."/>
            <person name="Coppee J.-Y."/>
            <person name="Floyd-Averette A."/>
            <person name="Gaillardin C."/>
            <person name="Gerik K.J."/>
            <person name="Goldberg J."/>
            <person name="Gonzalez-Hilarion S."/>
            <person name="Gujja S."/>
            <person name="Hamlin J.L."/>
            <person name="Hsueh Y.-P."/>
            <person name="Ianiri G."/>
            <person name="Jones S."/>
            <person name="Kodira C.D."/>
            <person name="Kozubowski L."/>
            <person name="Lam W."/>
            <person name="Marra M."/>
            <person name="Mesner L.D."/>
            <person name="Mieczkowski P.A."/>
            <person name="Moyrand F."/>
            <person name="Nielsen K."/>
            <person name="Proux C."/>
            <person name="Rossignol T."/>
            <person name="Schein J.E."/>
            <person name="Sun S."/>
            <person name="Wollschlaeger C."/>
            <person name="Wood I.A."/>
            <person name="Zeng Q."/>
            <person name="Neuveglise C."/>
            <person name="Newlon C.S."/>
            <person name="Perfect J.R."/>
            <person name="Lodge J.K."/>
            <person name="Idnurm A."/>
            <person name="Stajich J.E."/>
            <person name="Kronstad J.W."/>
            <person name="Sanyal K."/>
            <person name="Heitman J."/>
            <person name="Fraser J.A."/>
            <person name="Cuomo C.A."/>
            <person name="Dietrich F.S."/>
        </authorList>
    </citation>
    <scope>NUCLEOTIDE SEQUENCE [LARGE SCALE GENOMIC DNA]</scope>
    <source>
        <strain>H99 / ATCC 208821 / CBS 10515 / FGSC 9487</strain>
    </source>
</reference>
<reference evidence="8" key="2">
    <citation type="journal article" date="2010" name="Eukaryot. Cell">
        <title>The vacuolar Ca^2(+) exchanger Vcx1 is involved in calcineurin-dependent Ca^2(+) tolerance and virulence in Cryptococcus neoformans.</title>
        <authorList>
            <person name="Kmetzsch L."/>
            <person name="Staats C.C."/>
            <person name="Simon E."/>
            <person name="Fonseca F.L."/>
            <person name="de Oliveira D.L."/>
            <person name="Sobrino L."/>
            <person name="Rodrigues J."/>
            <person name="Leal A.L."/>
            <person name="Nimrichter L."/>
            <person name="Rodrigues M.L."/>
            <person name="Schrank A."/>
            <person name="Vainstein M.H."/>
        </authorList>
    </citation>
    <scope>FUNCTION</scope>
    <scope>SUBCELLULAR LOCATION</scope>
    <scope>DISRUPTION PHENOTYPE</scope>
</reference>
<reference evidence="8" key="3">
    <citation type="journal article" date="2013" name="FEBS J.">
        <title>The calcium transporter Pmc1 provides Ca2+ tolerance and influences the progression of murine cryptococcal infection.</title>
        <authorList>
            <person name="Kmetzsch L."/>
            <person name="Staats C.C."/>
            <person name="Cupertino J.B."/>
            <person name="Fonseca F.L."/>
            <person name="Rodrigues M.L."/>
            <person name="Schrank A."/>
            <person name="Vainstein M.H."/>
        </authorList>
    </citation>
    <scope>DISRUPTION PHENOTYPE</scope>
</reference>
<reference evidence="8" key="4">
    <citation type="journal article" date="2018" name="Cell. Microbiol.">
        <title>Cryptococcal dissemination to the central nervous system requires the vacuolar calcium transporter Pmc1.</title>
        <authorList>
            <person name="Squizani E.D."/>
            <person name="Oliveira N.K."/>
            <person name="Reuwsaat J.C.V."/>
            <person name="Marques B.M."/>
            <person name="Lopes W."/>
            <person name="Gerber A.L."/>
            <person name="de Vasconcelos A.T.R."/>
            <person name="Lev S."/>
            <person name="Djordjevic J.T."/>
            <person name="Schrank A."/>
            <person name="Vainstein M.H."/>
            <person name="Staats C.C."/>
            <person name="Kmetzsch L."/>
        </authorList>
    </citation>
    <scope>DISRUPTION PHENOTYPE</scope>
</reference>
<keyword id="KW-0025">Alternative splicing</keyword>
<keyword id="KW-0106">Calcium</keyword>
<keyword id="KW-0109">Calcium transport</keyword>
<keyword id="KW-0406">Ion transport</keyword>
<keyword id="KW-0472">Membrane</keyword>
<keyword id="KW-0812">Transmembrane</keyword>
<keyword id="KW-1133">Transmembrane helix</keyword>
<keyword id="KW-0813">Transport</keyword>
<keyword id="KW-0926">Vacuole</keyword>
<comment type="function">
    <text evidence="4">Has a role in promoting intracellular calcium ion sequestration via the exchange of calcium ions for hydrogen ions across the vacuolar membrane.</text>
</comment>
<comment type="subcellular location">
    <subcellularLocation>
        <location evidence="4">Vacuole membrane</location>
        <topology evidence="2">Multi-pass membrane protein</topology>
    </subcellularLocation>
</comment>
<comment type="alternative products">
    <event type="alternative splicing"/>
    <isoform>
        <id>J9VDQ4-1</id>
        <name>1</name>
        <sequence type="displayed"/>
    </isoform>
    <isoform>
        <id>J9VDQ4-2</id>
        <name>2</name>
        <sequence type="described" ref="VSP_060770"/>
    </isoform>
</comment>
<comment type="disruption phenotype">
    <text evidence="4 5 6">Increases intracellular free calcium level (PubMed:20889719). Decreases urease activity (PubMed:29113016). Decreases concentration of the polysaccharide glucuronoxylomannan in growth medium (PubMed:20889719). Decreases RNA level of ECA1 (PubMed:20889719). Increases RNA level of PMR1 and PMC1 (PubMed:20889719). Sensitive to cyclosporine A in combination with; semi-permissive high temperature, or calcium chloride (PubMed:20889719). Resistance to cyclosporine A in combination with cadmium (PubMed:20889719). Normal cell wall integrity (PubMed:20889719). Normal capsule size (PubMed:20889719). Decreases virulence in a mouse intranasal inhalation infection model (PubMed:20889719). Normal virulence in a mouse systemic infection model (PubMed:29113016). Decreases susceptibility to phagocytosis by macrophages (PubMed:20889719, PubMed:29113016). Enhances calcium sensitivity of PMC1 disruption mutant (PubMed:23895559).</text>
</comment>
<comment type="similarity">
    <text evidence="2">Belongs to the Ca(2+):cation antiporter (CaCA) (TC 2.A.19) family.</text>
</comment>
<evidence type="ECO:0000250" key="1">
    <source>
        <dbReference type="UniProtKB" id="Q99385"/>
    </source>
</evidence>
<evidence type="ECO:0000255" key="2"/>
<evidence type="ECO:0000256" key="3">
    <source>
        <dbReference type="SAM" id="MobiDB-lite"/>
    </source>
</evidence>
<evidence type="ECO:0000269" key="4">
    <source>
    </source>
</evidence>
<evidence type="ECO:0000269" key="5">
    <source>
    </source>
</evidence>
<evidence type="ECO:0000269" key="6">
    <source>
    </source>
</evidence>
<evidence type="ECO:0000303" key="7">
    <source>
    </source>
</evidence>
<evidence type="ECO:0000305" key="8"/>
<evidence type="ECO:0000312" key="9">
    <source>
        <dbReference type="EMBL" id="AFR92163.2"/>
    </source>
</evidence>
<evidence type="ECO:0000312" key="10">
    <source>
        <dbReference type="Proteomes" id="UP000010091"/>
    </source>
</evidence>